<accession>B4K892</accession>
<evidence type="ECO:0000250" key="1"/>
<evidence type="ECO:0000250" key="2">
    <source>
        <dbReference type="UniProtKB" id="K7IM66"/>
    </source>
</evidence>
<evidence type="ECO:0000255" key="3">
    <source>
        <dbReference type="HAMAP-Rule" id="MF_03003"/>
    </source>
</evidence>
<evidence type="ECO:0000256" key="4">
    <source>
        <dbReference type="SAM" id="MobiDB-lite"/>
    </source>
</evidence>
<name>EI3D1_DROMO</name>
<reference key="1">
    <citation type="journal article" date="2007" name="Nature">
        <title>Evolution of genes and genomes on the Drosophila phylogeny.</title>
        <authorList>
            <consortium name="Drosophila 12 genomes consortium"/>
        </authorList>
    </citation>
    <scope>NUCLEOTIDE SEQUENCE [LARGE SCALE GENOMIC DNA]</scope>
    <source>
        <strain>Tucson 15081-1352.22</strain>
    </source>
</reference>
<sequence>MSETINTAAQFPSFEKPTVQFNEKGWGPCELPDTFKDVPYQPFSKNDRLGKICDWTSTSNNDKKYQNKYASTFGTGNQYAYYHEEDETTFHLVDTARVQKPPHQRGRFRNMRNSRSGRGRNARGGLNTHGHGMTTLNSKNVKARDPRRGVGKRFGNRGPPPKMRESSVAVRADWASIEEMDFPRLMKLSLPNIKEGEDITTCGTLEYYDKTYDRINVKNEKPLQKIDRIVHTVTTTDDPVIRRLSKTIGNVFATDAILATIMCSTRSNYSWDIVIEKVGEKIFMDKRDHTEFDLLTVNETSVEPPTDDDSSCNSPRNLAIEATFINHNFSQQVLKTGDQEAKYKFEEPNPFISEDEDIQVASVGYRYKKWELGSDIVLVARCEHDGVLQTPSGEPQFLSIKALNEWDSKLANGVEWRQKLDTQRGAVLANELRNNACKLAKWTVQAVLAGSDQLKLGYVSRINPRDHSRHVILGTQQFKPHEFATQINLSMDNAWGILRCIIDLVMKQKDGKYLIMKDPNKPIIRLYDIPDNTFDSDDSDDGEGDDGEGFQQVYNYANNSNKI</sequence>
<feature type="chain" id="PRO_0000364150" description="Eukaryotic translation initiation factor 3 subunit D-1">
    <location>
        <begin position="1"/>
        <end position="563"/>
    </location>
</feature>
<feature type="region of interest" description="Disordered" evidence="4">
    <location>
        <begin position="98"/>
        <end position="167"/>
    </location>
</feature>
<feature type="region of interest" description="RNA gate" evidence="2">
    <location>
        <begin position="291"/>
        <end position="305"/>
    </location>
</feature>
<feature type="compositionally biased region" description="Basic residues" evidence="4">
    <location>
        <begin position="100"/>
        <end position="121"/>
    </location>
</feature>
<feature type="modified residue" description="Phosphothreonine" evidence="1">
    <location>
        <position position="128"/>
    </location>
</feature>
<proteinExistence type="inferred from homology"/>
<keyword id="KW-0963">Cytoplasm</keyword>
<keyword id="KW-0396">Initiation factor</keyword>
<keyword id="KW-0597">Phosphoprotein</keyword>
<keyword id="KW-0648">Protein biosynthesis</keyword>
<keyword id="KW-1185">Reference proteome</keyword>
<keyword id="KW-0694">RNA-binding</keyword>
<protein>
    <recommendedName>
        <fullName evidence="3">Eukaryotic translation initiation factor 3 subunit D-1</fullName>
        <shortName evidence="3">eIF3d-1</shortName>
    </recommendedName>
    <alternativeName>
        <fullName evidence="3">Eukaryotic translation initiation factor 3 subunit 7-1</fullName>
    </alternativeName>
    <alternativeName>
        <fullName>Eukaryotic translation initiation factor 3 subunit p66</fullName>
    </alternativeName>
</protein>
<gene>
    <name evidence="3" type="primary">eIF3d1</name>
    <name type="synonym">eIF-3p66</name>
    <name type="ORF">GI22779</name>
</gene>
<organism>
    <name type="scientific">Drosophila mojavensis</name>
    <name type="common">Fruit fly</name>
    <dbReference type="NCBI Taxonomy" id="7230"/>
    <lineage>
        <taxon>Eukaryota</taxon>
        <taxon>Metazoa</taxon>
        <taxon>Ecdysozoa</taxon>
        <taxon>Arthropoda</taxon>
        <taxon>Hexapoda</taxon>
        <taxon>Insecta</taxon>
        <taxon>Pterygota</taxon>
        <taxon>Neoptera</taxon>
        <taxon>Endopterygota</taxon>
        <taxon>Diptera</taxon>
        <taxon>Brachycera</taxon>
        <taxon>Muscomorpha</taxon>
        <taxon>Ephydroidea</taxon>
        <taxon>Drosophilidae</taxon>
        <taxon>Drosophila</taxon>
    </lineage>
</organism>
<comment type="function">
    <text evidence="3">mRNA cap-binding component of the eukaryotic translation initiation factor 3 (eIF-3) complex, which is involved in protein synthesis of a specialized repertoire of mRNAs and, together with other initiation factors, stimulates binding of mRNA and methionyl-tRNAi to the 40S ribosome. The eIF-3 complex specifically targets and initiates translation of a subset of mRNAs involved in cell proliferation. In the eIF-3 complex, eif3d specifically recognizes and binds the 7-methylguanosine cap of a subset of mRNAs.</text>
</comment>
<comment type="subunit">
    <text evidence="3">Component of the eukaryotic translation initiation factor 3 (eIF-3) complex. The eIF-3 complex interacts with pix.</text>
</comment>
<comment type="subcellular location">
    <subcellularLocation>
        <location evidence="3">Cytoplasm</location>
    </subcellularLocation>
</comment>
<comment type="domain">
    <text evidence="3">The RNA gate region regulates mRNA cap recognition to prevent promiscuous mRNA-binding before assembly of eif3d into the full eukaryotic translation initiation factor 3 (eIF-3) complex.</text>
</comment>
<comment type="similarity">
    <text evidence="3">Belongs to the eIF-3 subunit D family.</text>
</comment>
<dbReference type="EMBL" id="CH933806">
    <property type="protein sequence ID" value="EDW15446.1"/>
    <property type="molecule type" value="Genomic_DNA"/>
</dbReference>
<dbReference type="SMR" id="B4K892"/>
<dbReference type="FunCoup" id="B4K892">
    <property type="interactions" value="2751"/>
</dbReference>
<dbReference type="EnsemblMetazoa" id="FBtr0173504">
    <property type="protein sequence ID" value="FBpp0171996"/>
    <property type="gene ID" value="FBgn0145506"/>
</dbReference>
<dbReference type="EnsemblMetazoa" id="XM_001999949.4">
    <property type="protein sequence ID" value="XP_001999985.1"/>
    <property type="gene ID" value="LOC6573926"/>
</dbReference>
<dbReference type="GeneID" id="6573926"/>
<dbReference type="KEGG" id="dmo:Dmoj_GI22779"/>
<dbReference type="CTD" id="42789"/>
<dbReference type="eggNOG" id="KOG2479">
    <property type="taxonomic scope" value="Eukaryota"/>
</dbReference>
<dbReference type="HOGENOM" id="CLU_024521_2_0_1"/>
<dbReference type="InParanoid" id="B4K892"/>
<dbReference type="OMA" id="FMDKRDN"/>
<dbReference type="OrthoDB" id="16538at2759"/>
<dbReference type="PhylomeDB" id="B4K892"/>
<dbReference type="ChiTaRS" id="eIF-3p66">
    <property type="organism name" value="fly"/>
</dbReference>
<dbReference type="Proteomes" id="UP000009192">
    <property type="component" value="Unassembled WGS sequence"/>
</dbReference>
<dbReference type="GO" id="GO:0016282">
    <property type="term" value="C:eukaryotic 43S preinitiation complex"/>
    <property type="evidence" value="ECO:0007669"/>
    <property type="project" value="UniProtKB-UniRule"/>
</dbReference>
<dbReference type="GO" id="GO:0033290">
    <property type="term" value="C:eukaryotic 48S preinitiation complex"/>
    <property type="evidence" value="ECO:0007669"/>
    <property type="project" value="UniProtKB-UniRule"/>
</dbReference>
<dbReference type="GO" id="GO:0005852">
    <property type="term" value="C:eukaryotic translation initiation factor 3 complex"/>
    <property type="evidence" value="ECO:0000250"/>
    <property type="project" value="UniProtKB"/>
</dbReference>
<dbReference type="GO" id="GO:0005634">
    <property type="term" value="C:nucleus"/>
    <property type="evidence" value="ECO:0007669"/>
    <property type="project" value="EnsemblMetazoa"/>
</dbReference>
<dbReference type="GO" id="GO:0098808">
    <property type="term" value="F:mRNA cap binding"/>
    <property type="evidence" value="ECO:0007669"/>
    <property type="project" value="UniProtKB-UniRule"/>
</dbReference>
<dbReference type="GO" id="GO:0003743">
    <property type="term" value="F:translation initiation factor activity"/>
    <property type="evidence" value="ECO:0000250"/>
    <property type="project" value="UniProtKB"/>
</dbReference>
<dbReference type="GO" id="GO:0002191">
    <property type="term" value="P:cap-dependent translational initiation"/>
    <property type="evidence" value="ECO:0007669"/>
    <property type="project" value="UniProtKB-UniRule"/>
</dbReference>
<dbReference type="GO" id="GO:0001732">
    <property type="term" value="P:formation of cytoplasmic translation initiation complex"/>
    <property type="evidence" value="ECO:0007669"/>
    <property type="project" value="UniProtKB-UniRule"/>
</dbReference>
<dbReference type="GO" id="GO:0006446">
    <property type="term" value="P:regulation of translational initiation"/>
    <property type="evidence" value="ECO:0000250"/>
    <property type="project" value="UniProtKB"/>
</dbReference>
<dbReference type="HAMAP" id="MF_03003">
    <property type="entry name" value="eIF3d"/>
    <property type="match status" value="1"/>
</dbReference>
<dbReference type="InterPro" id="IPR007783">
    <property type="entry name" value="eIF3d"/>
</dbReference>
<dbReference type="PANTHER" id="PTHR12399">
    <property type="entry name" value="EUKARYOTIC TRANSLATION INITIATION FACTOR 3 SUBUNIT 7"/>
    <property type="match status" value="1"/>
</dbReference>
<dbReference type="PANTHER" id="PTHR12399:SF0">
    <property type="entry name" value="EUKARYOTIC TRANSLATION INITIATION FACTOR 3 SUBUNIT D"/>
    <property type="match status" value="1"/>
</dbReference>
<dbReference type="Pfam" id="PF05091">
    <property type="entry name" value="eIF-3_zeta"/>
    <property type="match status" value="1"/>
</dbReference>
<dbReference type="PIRSF" id="PIRSF016281">
    <property type="entry name" value="EIF-3_zeta"/>
    <property type="match status" value="1"/>
</dbReference>